<evidence type="ECO:0000255" key="1">
    <source>
        <dbReference type="HAMAP-Rule" id="MF_01713"/>
    </source>
</evidence>
<gene>
    <name evidence="1" type="primary">phnC1</name>
    <name type="ordered locus">all2230</name>
</gene>
<sequence length="265" mass="28844">MATTVAIEVSNLSKSFKGKTAIKNVYCSINEGEMVALIGASGSGKSTLLRHINGLHIGDAGTVYIFGTVLQSKGKVHSKITSLRSQIGCIFQQFNLVNRLTVIENVLVGKLARLSILRSILRLFSKEEKAQALSALERVGIIEHAYKRASKLSGGQQQRVAIARCLVQGAKIILADEPIASLDPESARKVMELLVQLNRQSGITVVASLHQIQMVRSYFDRAIALRDGEVMFDGATVELDDKKLNEIYGTAAEELVMRGHGELLV</sequence>
<feature type="chain" id="PRO_0000092685" description="Phosphonates import ATP-binding protein PhnC 1">
    <location>
        <begin position="1"/>
        <end position="265"/>
    </location>
</feature>
<feature type="domain" description="ABC transporter" evidence="1">
    <location>
        <begin position="7"/>
        <end position="252"/>
    </location>
</feature>
<feature type="binding site" evidence="1">
    <location>
        <begin position="39"/>
        <end position="46"/>
    </location>
    <ligand>
        <name>ATP</name>
        <dbReference type="ChEBI" id="CHEBI:30616"/>
    </ligand>
</feature>
<reference key="1">
    <citation type="journal article" date="2001" name="DNA Res.">
        <title>Complete genomic sequence of the filamentous nitrogen-fixing cyanobacterium Anabaena sp. strain PCC 7120.</title>
        <authorList>
            <person name="Kaneko T."/>
            <person name="Nakamura Y."/>
            <person name="Wolk C.P."/>
            <person name="Kuritz T."/>
            <person name="Sasamoto S."/>
            <person name="Watanabe A."/>
            <person name="Iriguchi M."/>
            <person name="Ishikawa A."/>
            <person name="Kawashima K."/>
            <person name="Kimura T."/>
            <person name="Kishida Y."/>
            <person name="Kohara M."/>
            <person name="Matsumoto M."/>
            <person name="Matsuno A."/>
            <person name="Muraki A."/>
            <person name="Nakazaki N."/>
            <person name="Shimpo S."/>
            <person name="Sugimoto M."/>
            <person name="Takazawa M."/>
            <person name="Yamada M."/>
            <person name="Yasuda M."/>
            <person name="Tabata S."/>
        </authorList>
    </citation>
    <scope>NUCLEOTIDE SEQUENCE [LARGE SCALE GENOMIC DNA]</scope>
    <source>
        <strain>PCC 7120 / SAG 25.82 / UTEX 2576</strain>
    </source>
</reference>
<proteinExistence type="inferred from homology"/>
<protein>
    <recommendedName>
        <fullName evidence="1">Phosphonates import ATP-binding protein PhnC 1</fullName>
        <ecNumber evidence="1">7.3.2.2</ecNumber>
    </recommendedName>
</protein>
<keyword id="KW-0067">ATP-binding</keyword>
<keyword id="KW-0997">Cell inner membrane</keyword>
<keyword id="KW-1003">Cell membrane</keyword>
<keyword id="KW-0472">Membrane</keyword>
<keyword id="KW-0547">Nucleotide-binding</keyword>
<keyword id="KW-0918">Phosphonate transport</keyword>
<keyword id="KW-1185">Reference proteome</keyword>
<keyword id="KW-1278">Translocase</keyword>
<keyword id="KW-0813">Transport</keyword>
<dbReference type="EC" id="7.3.2.2" evidence="1"/>
<dbReference type="EMBL" id="BA000019">
    <property type="protein sequence ID" value="BAB73929.1"/>
    <property type="molecule type" value="Genomic_DNA"/>
</dbReference>
<dbReference type="PIR" id="AG2084">
    <property type="entry name" value="AG2084"/>
</dbReference>
<dbReference type="SMR" id="Q8YUV1"/>
<dbReference type="STRING" id="103690.gene:10494259"/>
<dbReference type="KEGG" id="ana:all2230"/>
<dbReference type="eggNOG" id="COG3638">
    <property type="taxonomic scope" value="Bacteria"/>
</dbReference>
<dbReference type="OrthoDB" id="9802264at2"/>
<dbReference type="Proteomes" id="UP000002483">
    <property type="component" value="Chromosome"/>
</dbReference>
<dbReference type="GO" id="GO:0005886">
    <property type="term" value="C:plasma membrane"/>
    <property type="evidence" value="ECO:0007669"/>
    <property type="project" value="UniProtKB-SubCell"/>
</dbReference>
<dbReference type="GO" id="GO:0015416">
    <property type="term" value="F:ABC-type phosphonate transporter activity"/>
    <property type="evidence" value="ECO:0007669"/>
    <property type="project" value="UniProtKB-EC"/>
</dbReference>
<dbReference type="GO" id="GO:0005524">
    <property type="term" value="F:ATP binding"/>
    <property type="evidence" value="ECO:0007669"/>
    <property type="project" value="UniProtKB-KW"/>
</dbReference>
<dbReference type="GO" id="GO:0016887">
    <property type="term" value="F:ATP hydrolysis activity"/>
    <property type="evidence" value="ECO:0007669"/>
    <property type="project" value="InterPro"/>
</dbReference>
<dbReference type="CDD" id="cd03256">
    <property type="entry name" value="ABC_PhnC_transporter"/>
    <property type="match status" value="1"/>
</dbReference>
<dbReference type="Gene3D" id="3.40.50.300">
    <property type="entry name" value="P-loop containing nucleotide triphosphate hydrolases"/>
    <property type="match status" value="1"/>
</dbReference>
<dbReference type="InterPro" id="IPR003593">
    <property type="entry name" value="AAA+_ATPase"/>
</dbReference>
<dbReference type="InterPro" id="IPR003439">
    <property type="entry name" value="ABC_transporter-like_ATP-bd"/>
</dbReference>
<dbReference type="InterPro" id="IPR017871">
    <property type="entry name" value="ABC_transporter-like_CS"/>
</dbReference>
<dbReference type="InterPro" id="IPR012693">
    <property type="entry name" value="ABC_transpr_PhnC"/>
</dbReference>
<dbReference type="InterPro" id="IPR050086">
    <property type="entry name" value="MetN_ABC_transporter-like"/>
</dbReference>
<dbReference type="InterPro" id="IPR027417">
    <property type="entry name" value="P-loop_NTPase"/>
</dbReference>
<dbReference type="NCBIfam" id="TIGR02315">
    <property type="entry name" value="ABC_phnC"/>
    <property type="match status" value="1"/>
</dbReference>
<dbReference type="PANTHER" id="PTHR43166">
    <property type="entry name" value="AMINO ACID IMPORT ATP-BINDING PROTEIN"/>
    <property type="match status" value="1"/>
</dbReference>
<dbReference type="PANTHER" id="PTHR43166:SF6">
    <property type="entry name" value="PHOSPHONATES IMPORT ATP-BINDING PROTEIN PHNC"/>
    <property type="match status" value="1"/>
</dbReference>
<dbReference type="Pfam" id="PF00005">
    <property type="entry name" value="ABC_tran"/>
    <property type="match status" value="1"/>
</dbReference>
<dbReference type="SMART" id="SM00382">
    <property type="entry name" value="AAA"/>
    <property type="match status" value="1"/>
</dbReference>
<dbReference type="SUPFAM" id="SSF52540">
    <property type="entry name" value="P-loop containing nucleoside triphosphate hydrolases"/>
    <property type="match status" value="1"/>
</dbReference>
<dbReference type="PROSITE" id="PS00211">
    <property type="entry name" value="ABC_TRANSPORTER_1"/>
    <property type="match status" value="1"/>
</dbReference>
<dbReference type="PROSITE" id="PS50893">
    <property type="entry name" value="ABC_TRANSPORTER_2"/>
    <property type="match status" value="1"/>
</dbReference>
<dbReference type="PROSITE" id="PS51249">
    <property type="entry name" value="PHNC"/>
    <property type="match status" value="1"/>
</dbReference>
<comment type="function">
    <text evidence="1">Part of the ABC transporter complex PhnCDE involved in phosphonates import. Responsible for energy coupling to the transport system.</text>
</comment>
<comment type="catalytic activity">
    <reaction evidence="1">
        <text>phosphonate(out) + ATP + H2O = phosphonate(in) + ADP + phosphate + H(+)</text>
        <dbReference type="Rhea" id="RHEA:18065"/>
        <dbReference type="ChEBI" id="CHEBI:15377"/>
        <dbReference type="ChEBI" id="CHEBI:15378"/>
        <dbReference type="ChEBI" id="CHEBI:16215"/>
        <dbReference type="ChEBI" id="CHEBI:30616"/>
        <dbReference type="ChEBI" id="CHEBI:43474"/>
        <dbReference type="ChEBI" id="CHEBI:456216"/>
        <dbReference type="EC" id="7.3.2.2"/>
    </reaction>
</comment>
<comment type="subunit">
    <text evidence="1">The complex is composed of two ATP-binding proteins (PhnC), two transmembrane proteins (PhnE) and a solute-binding protein (PhnD).</text>
</comment>
<comment type="subcellular location">
    <subcellularLocation>
        <location evidence="1">Cell inner membrane</location>
        <topology evidence="1">Peripheral membrane protein</topology>
    </subcellularLocation>
</comment>
<comment type="similarity">
    <text evidence="1">Belongs to the ABC transporter superfamily. Phosphonates importer (TC 3.A.1.9.1) family.</text>
</comment>
<accession>Q8YUV1</accession>
<name>PHNC1_NOSS1</name>
<organism>
    <name type="scientific">Nostoc sp. (strain PCC 7120 / SAG 25.82 / UTEX 2576)</name>
    <dbReference type="NCBI Taxonomy" id="103690"/>
    <lineage>
        <taxon>Bacteria</taxon>
        <taxon>Bacillati</taxon>
        <taxon>Cyanobacteriota</taxon>
        <taxon>Cyanophyceae</taxon>
        <taxon>Nostocales</taxon>
        <taxon>Nostocaceae</taxon>
        <taxon>Nostoc</taxon>
    </lineage>
</organism>